<accession>O87320</accession>
<reference key="1">
    <citation type="journal article" date="2001" name="Proc. Natl. Acad. Sci. U.S.A.">
        <title>Analysis of the chromosome sequence of the legume symbiont Sinorhizobium meliloti strain 1021.</title>
        <authorList>
            <person name="Capela D."/>
            <person name="Barloy-Hubler F."/>
            <person name="Gouzy J."/>
            <person name="Bothe G."/>
            <person name="Ampe F."/>
            <person name="Batut J."/>
            <person name="Boistard P."/>
            <person name="Becker A."/>
            <person name="Boutry M."/>
            <person name="Cadieu E."/>
            <person name="Dreano S."/>
            <person name="Gloux S."/>
            <person name="Godrie T."/>
            <person name="Goffeau A."/>
            <person name="Kahn D."/>
            <person name="Kiss E."/>
            <person name="Lelaure V."/>
            <person name="Masuy D."/>
            <person name="Pohl T."/>
            <person name="Portetelle D."/>
            <person name="Puehler A."/>
            <person name="Purnelle B."/>
            <person name="Ramsperger U."/>
            <person name="Renard C."/>
            <person name="Thebault P."/>
            <person name="Vandenbol M."/>
            <person name="Weidner S."/>
            <person name="Galibert F."/>
        </authorList>
    </citation>
    <scope>NUCLEOTIDE SEQUENCE [LARGE SCALE GENOMIC DNA]</scope>
    <source>
        <strain>1021</strain>
    </source>
</reference>
<reference key="2">
    <citation type="journal article" date="2001" name="Science">
        <title>The composite genome of the legume symbiont Sinorhizobium meliloti.</title>
        <authorList>
            <person name="Galibert F."/>
            <person name="Finan T.M."/>
            <person name="Long S.R."/>
            <person name="Puehler A."/>
            <person name="Abola P."/>
            <person name="Ampe F."/>
            <person name="Barloy-Hubler F."/>
            <person name="Barnett M.J."/>
            <person name="Becker A."/>
            <person name="Boistard P."/>
            <person name="Bothe G."/>
            <person name="Boutry M."/>
            <person name="Bowser L."/>
            <person name="Buhrmester J."/>
            <person name="Cadieu E."/>
            <person name="Capela D."/>
            <person name="Chain P."/>
            <person name="Cowie A."/>
            <person name="Davis R.W."/>
            <person name="Dreano S."/>
            <person name="Federspiel N.A."/>
            <person name="Fisher R.F."/>
            <person name="Gloux S."/>
            <person name="Godrie T."/>
            <person name="Goffeau A."/>
            <person name="Golding B."/>
            <person name="Gouzy J."/>
            <person name="Gurjal M."/>
            <person name="Hernandez-Lucas I."/>
            <person name="Hong A."/>
            <person name="Huizar L."/>
            <person name="Hyman R.W."/>
            <person name="Jones T."/>
            <person name="Kahn D."/>
            <person name="Kahn M.L."/>
            <person name="Kalman S."/>
            <person name="Keating D.H."/>
            <person name="Kiss E."/>
            <person name="Komp C."/>
            <person name="Lelaure V."/>
            <person name="Masuy D."/>
            <person name="Palm C."/>
            <person name="Peck M.C."/>
            <person name="Pohl T.M."/>
            <person name="Portetelle D."/>
            <person name="Purnelle B."/>
            <person name="Ramsperger U."/>
            <person name="Surzycki R."/>
            <person name="Thebault P."/>
            <person name="Vandenbol M."/>
            <person name="Vorhoelter F.J."/>
            <person name="Weidner S."/>
            <person name="Wells D.H."/>
            <person name="Wong K."/>
            <person name="Yeh K.-C."/>
            <person name="Batut J."/>
        </authorList>
    </citation>
    <scope>NUCLEOTIDE SEQUENCE [LARGE SCALE GENOMIC DNA]</scope>
    <source>
        <strain>1021</strain>
    </source>
</reference>
<reference key="3">
    <citation type="journal article" date="1998" name="Can. J. Microbiol.">
        <title>The phbC (poly-beta-hydroxybutyrate synthase) gene of Rhizobium (Sinorhizobium) meliloti and characterization of phbC mutants.</title>
        <authorList>
            <person name="Willis L.B."/>
            <person name="Walker G.C."/>
        </authorList>
    </citation>
    <scope>NUCLEOTIDE SEQUENCE [GENOMIC DNA] OF 1-234</scope>
    <source>
        <strain>1021</strain>
    </source>
</reference>
<feature type="chain" id="PRO_0000123923" description="Putative aminotransferase AatC">
    <location>
        <begin position="1"/>
        <end position="405"/>
    </location>
</feature>
<feature type="modified residue" description="N6-(pyridoxal phosphate)lysine" evidence="1">
    <location>
        <position position="238"/>
    </location>
</feature>
<feature type="sequence conflict" description="In Ref. 3; AAC61900." evidence="2" ref="3">
    <original>P</original>
    <variation>R</variation>
    <location>
        <position position="43"/>
    </location>
</feature>
<sequence>MEEFHKVRRLPPYVFEQVNRLKASARAAGADIIDLGMGNPDLPTPQSIVDKLCEVVQDPRTHRYSSSKGIPGLRRAQAAYYARRFGVKLNPETQVVATLGSKEGFANMAQAITAPGDVVLCPNPTYPIHAFGFLMAGGVIRSISVEPDESFFPPLERAVRHSIPKPLALILNYPSNPTAQVATLDFYKDVIAFAKKHDIIVLSDLAYSEIYFDDAPPPSVLEVPGATDVTVEFTSMSKTFSMPGWRMGFAVGNERLIAALTRVKSYLDYGAFTPIQVAATQALNGDGSDIAEVRAIYKRRRDVMVESFGKAGFEVPPPPATMFAWAKIPEKFRHLGSLEFSKLLVEKADVAVAPGIGFGEQGDDYVRLALVENEHRIRQAARNIKRFLSSADETMHNVISLNAHR</sequence>
<name>AATC_RHIME</name>
<dbReference type="EC" id="2.6.1.-"/>
<dbReference type="EMBL" id="AL591688">
    <property type="protein sequence ID" value="CAC46302.1"/>
    <property type="molecule type" value="Genomic_DNA"/>
</dbReference>
<dbReference type="EMBL" id="AF031938">
    <property type="protein sequence ID" value="AAC61900.1"/>
    <property type="status" value="ALT_INIT"/>
    <property type="molecule type" value="Genomic_DNA"/>
</dbReference>
<dbReference type="RefSeq" id="NP_385829.1">
    <property type="nucleotide sequence ID" value="NC_003047.1"/>
</dbReference>
<dbReference type="RefSeq" id="WP_010969423.1">
    <property type="nucleotide sequence ID" value="NC_003047.1"/>
</dbReference>
<dbReference type="SMR" id="O87320"/>
<dbReference type="EnsemblBacteria" id="CAC46302">
    <property type="protein sequence ID" value="CAC46302"/>
    <property type="gene ID" value="SMc00294"/>
</dbReference>
<dbReference type="KEGG" id="sme:SMc00294"/>
<dbReference type="PATRIC" id="fig|266834.11.peg.3160"/>
<dbReference type="eggNOG" id="COG0436">
    <property type="taxonomic scope" value="Bacteria"/>
</dbReference>
<dbReference type="HOGENOM" id="CLU_017584_4_5_5"/>
<dbReference type="OrthoDB" id="9804407at2"/>
<dbReference type="Proteomes" id="UP000001976">
    <property type="component" value="Chromosome"/>
</dbReference>
<dbReference type="GO" id="GO:0005737">
    <property type="term" value="C:cytoplasm"/>
    <property type="evidence" value="ECO:0007669"/>
    <property type="project" value="UniProtKB-SubCell"/>
</dbReference>
<dbReference type="GO" id="GO:0030170">
    <property type="term" value="F:pyridoxal phosphate binding"/>
    <property type="evidence" value="ECO:0007669"/>
    <property type="project" value="InterPro"/>
</dbReference>
<dbReference type="GO" id="GO:0008483">
    <property type="term" value="F:transaminase activity"/>
    <property type="evidence" value="ECO:0007669"/>
    <property type="project" value="UniProtKB-KW"/>
</dbReference>
<dbReference type="GO" id="GO:0009058">
    <property type="term" value="P:biosynthetic process"/>
    <property type="evidence" value="ECO:0007669"/>
    <property type="project" value="InterPro"/>
</dbReference>
<dbReference type="CDD" id="cd00609">
    <property type="entry name" value="AAT_like"/>
    <property type="match status" value="1"/>
</dbReference>
<dbReference type="Gene3D" id="3.90.1150.10">
    <property type="entry name" value="Aspartate Aminotransferase, domain 1"/>
    <property type="match status" value="1"/>
</dbReference>
<dbReference type="Gene3D" id="3.40.640.10">
    <property type="entry name" value="Type I PLP-dependent aspartate aminotransferase-like (Major domain)"/>
    <property type="match status" value="1"/>
</dbReference>
<dbReference type="InterPro" id="IPR004839">
    <property type="entry name" value="Aminotransferase_I/II_large"/>
</dbReference>
<dbReference type="InterPro" id="IPR050881">
    <property type="entry name" value="LL-DAP_aminotransferase"/>
</dbReference>
<dbReference type="InterPro" id="IPR004838">
    <property type="entry name" value="NHTrfase_class1_PyrdxlP-BS"/>
</dbReference>
<dbReference type="InterPro" id="IPR015424">
    <property type="entry name" value="PyrdxlP-dep_Trfase"/>
</dbReference>
<dbReference type="InterPro" id="IPR015421">
    <property type="entry name" value="PyrdxlP-dep_Trfase_major"/>
</dbReference>
<dbReference type="InterPro" id="IPR015422">
    <property type="entry name" value="PyrdxlP-dep_Trfase_small"/>
</dbReference>
<dbReference type="NCBIfam" id="NF006604">
    <property type="entry name" value="PRK09148.1"/>
    <property type="match status" value="1"/>
</dbReference>
<dbReference type="PANTHER" id="PTHR42832">
    <property type="entry name" value="AMINO ACID AMINOTRANSFERASE"/>
    <property type="match status" value="1"/>
</dbReference>
<dbReference type="PANTHER" id="PTHR42832:SF1">
    <property type="entry name" value="GLUTAMATE-PYRUVATE AMINOTRANSFERASE ALAC"/>
    <property type="match status" value="1"/>
</dbReference>
<dbReference type="Pfam" id="PF00155">
    <property type="entry name" value="Aminotran_1_2"/>
    <property type="match status" value="1"/>
</dbReference>
<dbReference type="SUPFAM" id="SSF53383">
    <property type="entry name" value="PLP-dependent transferases"/>
    <property type="match status" value="1"/>
</dbReference>
<dbReference type="PROSITE" id="PS00105">
    <property type="entry name" value="AA_TRANSFER_CLASS_1"/>
    <property type="match status" value="1"/>
</dbReference>
<proteinExistence type="inferred from homology"/>
<comment type="cofactor">
    <cofactor evidence="2">
        <name>pyridoxal 5'-phosphate</name>
        <dbReference type="ChEBI" id="CHEBI:597326"/>
    </cofactor>
</comment>
<comment type="subunit">
    <text evidence="1">Homodimer.</text>
</comment>
<comment type="subcellular location">
    <subcellularLocation>
        <location evidence="1">Cytoplasm</location>
    </subcellularLocation>
</comment>
<comment type="similarity">
    <text evidence="2">Belongs to the class-I pyridoxal-phosphate-dependent aminotransferase family.</text>
</comment>
<comment type="sequence caution" evidence="2">
    <conflict type="erroneous initiation">
        <sequence resource="EMBL-CDS" id="AAC61900"/>
    </conflict>
</comment>
<protein>
    <recommendedName>
        <fullName>Putative aminotransferase AatC</fullName>
        <ecNumber>2.6.1.-</ecNumber>
    </recommendedName>
</protein>
<gene>
    <name type="primary">aatC</name>
    <name type="ordered locus">R01723</name>
    <name type="ORF">SMc00294</name>
</gene>
<keyword id="KW-0032">Aminotransferase</keyword>
<keyword id="KW-0963">Cytoplasm</keyword>
<keyword id="KW-0663">Pyridoxal phosphate</keyword>
<keyword id="KW-1185">Reference proteome</keyword>
<keyword id="KW-0808">Transferase</keyword>
<evidence type="ECO:0000250" key="1"/>
<evidence type="ECO:0000305" key="2"/>
<organism>
    <name type="scientific">Rhizobium meliloti (strain 1021)</name>
    <name type="common">Ensifer meliloti</name>
    <name type="synonym">Sinorhizobium meliloti</name>
    <dbReference type="NCBI Taxonomy" id="266834"/>
    <lineage>
        <taxon>Bacteria</taxon>
        <taxon>Pseudomonadati</taxon>
        <taxon>Pseudomonadota</taxon>
        <taxon>Alphaproteobacteria</taxon>
        <taxon>Hyphomicrobiales</taxon>
        <taxon>Rhizobiaceae</taxon>
        <taxon>Sinorhizobium/Ensifer group</taxon>
        <taxon>Sinorhizobium</taxon>
    </lineage>
</organism>